<dbReference type="EMBL" id="AJ508401">
    <property type="protein sequence ID" value="CAD48251.1"/>
    <property type="molecule type" value="Genomic_DNA"/>
</dbReference>
<dbReference type="RefSeq" id="YP_003673.1">
    <property type="nucleotide sequence ID" value="NC_005825.1"/>
</dbReference>
<dbReference type="SMR" id="Q70XG0"/>
<dbReference type="GeneID" id="2769150"/>
<dbReference type="CTD" id="4519"/>
<dbReference type="GO" id="GO:0005743">
    <property type="term" value="C:mitochondrial inner membrane"/>
    <property type="evidence" value="ECO:0007669"/>
    <property type="project" value="UniProtKB-SubCell"/>
</dbReference>
<dbReference type="GO" id="GO:0045275">
    <property type="term" value="C:respiratory chain complex III"/>
    <property type="evidence" value="ECO:0007669"/>
    <property type="project" value="InterPro"/>
</dbReference>
<dbReference type="GO" id="GO:0046872">
    <property type="term" value="F:metal ion binding"/>
    <property type="evidence" value="ECO:0007669"/>
    <property type="project" value="UniProtKB-KW"/>
</dbReference>
<dbReference type="GO" id="GO:0008121">
    <property type="term" value="F:ubiquinol-cytochrome-c reductase activity"/>
    <property type="evidence" value="ECO:0007669"/>
    <property type="project" value="InterPro"/>
</dbReference>
<dbReference type="GO" id="GO:0006122">
    <property type="term" value="P:mitochondrial electron transport, ubiquinol to cytochrome c"/>
    <property type="evidence" value="ECO:0007669"/>
    <property type="project" value="TreeGrafter"/>
</dbReference>
<dbReference type="CDD" id="cd00290">
    <property type="entry name" value="cytochrome_b_C"/>
    <property type="match status" value="1"/>
</dbReference>
<dbReference type="CDD" id="cd00284">
    <property type="entry name" value="Cytochrome_b_N"/>
    <property type="match status" value="1"/>
</dbReference>
<dbReference type="FunFam" id="1.20.810.10:FF:000002">
    <property type="entry name" value="Cytochrome b"/>
    <property type="match status" value="1"/>
</dbReference>
<dbReference type="Gene3D" id="1.20.810.10">
    <property type="entry name" value="Cytochrome Bc1 Complex, Chain C"/>
    <property type="match status" value="1"/>
</dbReference>
<dbReference type="InterPro" id="IPR005798">
    <property type="entry name" value="Cyt_b/b6_C"/>
</dbReference>
<dbReference type="InterPro" id="IPR036150">
    <property type="entry name" value="Cyt_b/b6_C_sf"/>
</dbReference>
<dbReference type="InterPro" id="IPR005797">
    <property type="entry name" value="Cyt_b/b6_N"/>
</dbReference>
<dbReference type="InterPro" id="IPR027387">
    <property type="entry name" value="Cytb/b6-like_sf"/>
</dbReference>
<dbReference type="InterPro" id="IPR030689">
    <property type="entry name" value="Cytochrome_b"/>
</dbReference>
<dbReference type="InterPro" id="IPR048260">
    <property type="entry name" value="Cytochrome_b_C_euk/bac"/>
</dbReference>
<dbReference type="InterPro" id="IPR048259">
    <property type="entry name" value="Cytochrome_b_N_euk/bac"/>
</dbReference>
<dbReference type="InterPro" id="IPR016174">
    <property type="entry name" value="Di-haem_cyt_TM"/>
</dbReference>
<dbReference type="PANTHER" id="PTHR19271">
    <property type="entry name" value="CYTOCHROME B"/>
    <property type="match status" value="1"/>
</dbReference>
<dbReference type="PANTHER" id="PTHR19271:SF16">
    <property type="entry name" value="CYTOCHROME B"/>
    <property type="match status" value="1"/>
</dbReference>
<dbReference type="Pfam" id="PF00032">
    <property type="entry name" value="Cytochrom_B_C"/>
    <property type="match status" value="1"/>
</dbReference>
<dbReference type="Pfam" id="PF00033">
    <property type="entry name" value="Cytochrome_B"/>
    <property type="match status" value="1"/>
</dbReference>
<dbReference type="PIRSF" id="PIRSF038885">
    <property type="entry name" value="COB"/>
    <property type="match status" value="1"/>
</dbReference>
<dbReference type="SUPFAM" id="SSF81648">
    <property type="entry name" value="a domain/subunit of cytochrome bc1 complex (Ubiquinol-cytochrome c reductase)"/>
    <property type="match status" value="1"/>
</dbReference>
<dbReference type="SUPFAM" id="SSF81342">
    <property type="entry name" value="Transmembrane di-heme cytochromes"/>
    <property type="match status" value="1"/>
</dbReference>
<dbReference type="PROSITE" id="PS51003">
    <property type="entry name" value="CYTB_CTER"/>
    <property type="match status" value="1"/>
</dbReference>
<dbReference type="PROSITE" id="PS51002">
    <property type="entry name" value="CYTB_NTER"/>
    <property type="match status" value="1"/>
</dbReference>
<evidence type="ECO:0000250" key="1"/>
<evidence type="ECO:0000250" key="2">
    <source>
        <dbReference type="UniProtKB" id="P00157"/>
    </source>
</evidence>
<evidence type="ECO:0000255" key="3">
    <source>
        <dbReference type="PROSITE-ProRule" id="PRU00967"/>
    </source>
</evidence>
<evidence type="ECO:0000255" key="4">
    <source>
        <dbReference type="PROSITE-ProRule" id="PRU00968"/>
    </source>
</evidence>
<proteinExistence type="inferred from homology"/>
<name>CYB_THYEL</name>
<sequence>MTNLRKSHPLVKIINHSFIDLPAPSNISAWWNFGSLLGICLIIQILTGLFLAMHYTSDTLTAFSSVAHICRDVNFGWLIRNIHANGASMFFMCLFLHVGRGLYYGSYLFKETWNIGVILLLTVMATAFVGYVLPWGQMSFWGATVITNLLSAIPYIGTTLVEWIWGGFSVDKATLTRFFAFHFILPFIILALVIVHLLFLHETGSNNPTGINPDSDKIPFHPYYTIKDILGLILMILLLLTLALFSPDVLGDPDNFTPANPLNTPPHIKPEWYFLFAYAILRSIPNKLGGVLALLASILVLLAIPLLHTSNQRSLMFRPISQTLFWLLTANLLILTWIGGQPVEQPFIIIGQMASISYFTIIIILMPLAGMLENYMLQPKYP</sequence>
<feature type="chain" id="PRO_0000254868" description="Cytochrome b">
    <location>
        <begin position="1"/>
        <end position="382"/>
    </location>
</feature>
<feature type="transmembrane region" description="Helical" evidence="2">
    <location>
        <begin position="33"/>
        <end position="53"/>
    </location>
</feature>
<feature type="transmembrane region" description="Helical" evidence="2">
    <location>
        <begin position="77"/>
        <end position="98"/>
    </location>
</feature>
<feature type="transmembrane region" description="Helical" evidence="2">
    <location>
        <begin position="113"/>
        <end position="133"/>
    </location>
</feature>
<feature type="transmembrane region" description="Helical" evidence="2">
    <location>
        <begin position="178"/>
        <end position="198"/>
    </location>
</feature>
<feature type="transmembrane region" description="Helical" evidence="2">
    <location>
        <begin position="226"/>
        <end position="246"/>
    </location>
</feature>
<feature type="transmembrane region" description="Helical" evidence="2">
    <location>
        <begin position="288"/>
        <end position="308"/>
    </location>
</feature>
<feature type="transmembrane region" description="Helical" evidence="2">
    <location>
        <begin position="320"/>
        <end position="340"/>
    </location>
</feature>
<feature type="transmembrane region" description="Helical" evidence="2">
    <location>
        <begin position="347"/>
        <end position="367"/>
    </location>
</feature>
<feature type="binding site" description="axial binding residue" evidence="2">
    <location>
        <position position="83"/>
    </location>
    <ligand>
        <name>heme b</name>
        <dbReference type="ChEBI" id="CHEBI:60344"/>
        <label>b562</label>
    </ligand>
    <ligandPart>
        <name>Fe</name>
        <dbReference type="ChEBI" id="CHEBI:18248"/>
    </ligandPart>
</feature>
<feature type="binding site" description="axial binding residue" evidence="2">
    <location>
        <position position="97"/>
    </location>
    <ligand>
        <name>heme b</name>
        <dbReference type="ChEBI" id="CHEBI:60344"/>
        <label>b566</label>
    </ligand>
    <ligandPart>
        <name>Fe</name>
        <dbReference type="ChEBI" id="CHEBI:18248"/>
    </ligandPart>
</feature>
<feature type="binding site" description="axial binding residue" evidence="2">
    <location>
        <position position="182"/>
    </location>
    <ligand>
        <name>heme b</name>
        <dbReference type="ChEBI" id="CHEBI:60344"/>
        <label>b562</label>
    </ligand>
    <ligandPart>
        <name>Fe</name>
        <dbReference type="ChEBI" id="CHEBI:18248"/>
    </ligandPart>
</feature>
<feature type="binding site" description="axial binding residue" evidence="2">
    <location>
        <position position="196"/>
    </location>
    <ligand>
        <name>heme b</name>
        <dbReference type="ChEBI" id="CHEBI:60344"/>
        <label>b566</label>
    </ligand>
    <ligandPart>
        <name>Fe</name>
        <dbReference type="ChEBI" id="CHEBI:18248"/>
    </ligandPart>
</feature>
<feature type="binding site" evidence="2">
    <location>
        <position position="201"/>
    </location>
    <ligand>
        <name>a ubiquinone</name>
        <dbReference type="ChEBI" id="CHEBI:16389"/>
    </ligand>
</feature>
<organism>
    <name type="scientific">Thylamys elegans</name>
    <name type="common">Elegant fat-tailed mouse opossum</name>
    <dbReference type="NCBI Taxonomy" id="191871"/>
    <lineage>
        <taxon>Eukaryota</taxon>
        <taxon>Metazoa</taxon>
        <taxon>Chordata</taxon>
        <taxon>Craniata</taxon>
        <taxon>Vertebrata</taxon>
        <taxon>Euteleostomi</taxon>
        <taxon>Mammalia</taxon>
        <taxon>Metatheria</taxon>
        <taxon>Didelphimorphia</taxon>
        <taxon>Didelphidae</taxon>
        <taxon>Thylamys</taxon>
    </lineage>
</organism>
<keyword id="KW-0249">Electron transport</keyword>
<keyword id="KW-0349">Heme</keyword>
<keyword id="KW-0408">Iron</keyword>
<keyword id="KW-0472">Membrane</keyword>
<keyword id="KW-0479">Metal-binding</keyword>
<keyword id="KW-0496">Mitochondrion</keyword>
<keyword id="KW-0999">Mitochondrion inner membrane</keyword>
<keyword id="KW-0679">Respiratory chain</keyword>
<keyword id="KW-0812">Transmembrane</keyword>
<keyword id="KW-1133">Transmembrane helix</keyword>
<keyword id="KW-0813">Transport</keyword>
<keyword id="KW-0830">Ubiquinone</keyword>
<geneLocation type="mitochondrion"/>
<gene>
    <name type="primary">MT-CYB</name>
    <name type="synonym">COB</name>
    <name type="synonym">CYTB</name>
    <name type="synonym">MTCYB</name>
</gene>
<comment type="function">
    <text evidence="2">Component of the ubiquinol-cytochrome c reductase complex (complex III or cytochrome b-c1 complex) that is part of the mitochondrial respiratory chain. The b-c1 complex mediates electron transfer from ubiquinol to cytochrome c. Contributes to the generation of a proton gradient across the mitochondrial membrane that is then used for ATP synthesis.</text>
</comment>
<comment type="cofactor">
    <cofactor evidence="2">
        <name>heme b</name>
        <dbReference type="ChEBI" id="CHEBI:60344"/>
    </cofactor>
    <text evidence="2">Binds 2 heme b groups non-covalently.</text>
</comment>
<comment type="subunit">
    <text evidence="2">The cytochrome bc1 complex contains 11 subunits: 3 respiratory subunits (MT-CYB, CYC1 and UQCRFS1), 2 core proteins (UQCRC1 and UQCRC2) and 6 low-molecular weight proteins (UQCRH/QCR6, UQCRB/QCR7, UQCRQ/QCR8, UQCR10/QCR9, UQCR11/QCR10 and a cleavage product of UQCRFS1). This cytochrome bc1 complex then forms a dimer.</text>
</comment>
<comment type="subcellular location">
    <subcellularLocation>
        <location evidence="2">Mitochondrion inner membrane</location>
        <topology evidence="2">Multi-pass membrane protein</topology>
    </subcellularLocation>
</comment>
<comment type="miscellaneous">
    <text evidence="1">Heme 1 (or BL or b562) is low-potential and absorbs at about 562 nm, and heme 2 (or BH or b566) is high-potential and absorbs at about 566 nm.</text>
</comment>
<comment type="similarity">
    <text evidence="3 4">Belongs to the cytochrome b family.</text>
</comment>
<comment type="caution">
    <text evidence="2">The full-length protein contains only eight transmembrane helices, not nine as predicted by bioinformatics tools.</text>
</comment>
<protein>
    <recommendedName>
        <fullName>Cytochrome b</fullName>
    </recommendedName>
    <alternativeName>
        <fullName>Complex III subunit 3</fullName>
    </alternativeName>
    <alternativeName>
        <fullName>Complex III subunit III</fullName>
    </alternativeName>
    <alternativeName>
        <fullName>Cytochrome b-c1 complex subunit 3</fullName>
    </alternativeName>
    <alternativeName>
        <fullName>Ubiquinol-cytochrome-c reductase complex cytochrome b subunit</fullName>
    </alternativeName>
</protein>
<reference key="1">
    <citation type="journal article" date="2004" name="Gene">
        <title>Marsupial relationships and a timeline for marsupial radiation in South Gondwana.</title>
        <authorList>
            <person name="Nilsson M.A."/>
            <person name="Arnason U."/>
            <person name="Spencer P.B.S."/>
            <person name="Janke A."/>
        </authorList>
    </citation>
    <scope>NUCLEOTIDE SEQUENCE [GENOMIC DNA]</scope>
</reference>
<accession>Q70XG0</accession>